<protein>
    <recommendedName>
        <fullName>Uncharacterized protein YGL194C-A</fullName>
    </recommendedName>
</protein>
<gene>
    <name type="ordered locus">YGL194C-A</name>
</gene>
<comment type="subcellular location">
    <subcellularLocation>
        <location evidence="2">Membrane</location>
        <topology evidence="2">Single-pass membrane protein</topology>
    </subcellularLocation>
</comment>
<accession>Q2V2P6</accession>
<accession>D6VTV9</accession>
<reference key="1">
    <citation type="journal article" date="1997" name="Yeast">
        <title>Sequencing of a 40.5 kb fragment located on the left arm of chromosome VII from Saccharomyces cerevisiae.</title>
        <authorList>
            <person name="Coglievina M."/>
            <person name="Klima R."/>
            <person name="Bertani I."/>
            <person name="Delneri D."/>
            <person name="Zaccaria P."/>
            <person name="Bruschi C.V."/>
        </authorList>
    </citation>
    <scope>NUCLEOTIDE SEQUENCE [GENOMIC DNA]</scope>
    <source>
        <strain>ATCC 96604 / S288c / FY1679</strain>
    </source>
</reference>
<reference key="2">
    <citation type="journal article" date="1997" name="Nature">
        <title>The nucleotide sequence of Saccharomyces cerevisiae chromosome VII.</title>
        <authorList>
            <person name="Tettelin H."/>
            <person name="Agostoni-Carbone M.L."/>
            <person name="Albermann K."/>
            <person name="Albers M."/>
            <person name="Arroyo J."/>
            <person name="Backes U."/>
            <person name="Barreiros T."/>
            <person name="Bertani I."/>
            <person name="Bjourson A.J."/>
            <person name="Brueckner M."/>
            <person name="Bruschi C.V."/>
            <person name="Carignani G."/>
            <person name="Castagnoli L."/>
            <person name="Cerdan E."/>
            <person name="Clemente M.L."/>
            <person name="Coblenz A."/>
            <person name="Coglievina M."/>
            <person name="Coissac E."/>
            <person name="Defoor E."/>
            <person name="Del Bino S."/>
            <person name="Delius H."/>
            <person name="Delneri D."/>
            <person name="de Wergifosse P."/>
            <person name="Dujon B."/>
            <person name="Durand P."/>
            <person name="Entian K.-D."/>
            <person name="Eraso P."/>
            <person name="Escribano V."/>
            <person name="Fabiani L."/>
            <person name="Fartmann B."/>
            <person name="Feroli F."/>
            <person name="Feuermann M."/>
            <person name="Frontali L."/>
            <person name="Garcia-Gonzalez M."/>
            <person name="Garcia-Saez M.I."/>
            <person name="Goffeau A."/>
            <person name="Guerreiro P."/>
            <person name="Hani J."/>
            <person name="Hansen M."/>
            <person name="Hebling U."/>
            <person name="Hernandez K."/>
            <person name="Heumann K."/>
            <person name="Hilger F."/>
            <person name="Hofmann B."/>
            <person name="Indge K.J."/>
            <person name="James C.M."/>
            <person name="Klima R."/>
            <person name="Koetter P."/>
            <person name="Kramer B."/>
            <person name="Kramer W."/>
            <person name="Lauquin G."/>
            <person name="Leuther H."/>
            <person name="Louis E.J."/>
            <person name="Maillier E."/>
            <person name="Marconi A."/>
            <person name="Martegani E."/>
            <person name="Mazon M.J."/>
            <person name="Mazzoni C."/>
            <person name="McReynolds A.D.K."/>
            <person name="Melchioretto P."/>
            <person name="Mewes H.-W."/>
            <person name="Minenkova O."/>
            <person name="Mueller-Auer S."/>
            <person name="Nawrocki A."/>
            <person name="Netter P."/>
            <person name="Neu R."/>
            <person name="Nombela C."/>
            <person name="Oliver S.G."/>
            <person name="Panzeri L."/>
            <person name="Paoluzi S."/>
            <person name="Plevani P."/>
            <person name="Portetelle D."/>
            <person name="Portillo F."/>
            <person name="Potier S."/>
            <person name="Purnelle B."/>
            <person name="Rieger M."/>
            <person name="Riles L."/>
            <person name="Rinaldi T."/>
            <person name="Robben J."/>
            <person name="Rodrigues-Pousada C."/>
            <person name="Rodriguez-Belmonte E."/>
            <person name="Rodriguez-Torres A.M."/>
            <person name="Rose M."/>
            <person name="Ruzzi M."/>
            <person name="Saliola M."/>
            <person name="Sanchez-Perez M."/>
            <person name="Schaefer B."/>
            <person name="Schaefer M."/>
            <person name="Scharfe M."/>
            <person name="Schmidheini T."/>
            <person name="Schreer A."/>
            <person name="Skala J."/>
            <person name="Souciet J.-L."/>
            <person name="Steensma H.Y."/>
            <person name="Talla E."/>
            <person name="Thierry A."/>
            <person name="Vandenbol M."/>
            <person name="van der Aart Q.J.M."/>
            <person name="Van Dyck L."/>
            <person name="Vanoni M."/>
            <person name="Verhasselt P."/>
            <person name="Voet M."/>
            <person name="Volckaert G."/>
            <person name="Wambutt R."/>
            <person name="Watson M.D."/>
            <person name="Weber N."/>
            <person name="Wedler E."/>
            <person name="Wedler H."/>
            <person name="Wipfli P."/>
            <person name="Wolf K."/>
            <person name="Wright L.F."/>
            <person name="Zaccaria P."/>
            <person name="Zimmermann M."/>
            <person name="Zollner A."/>
            <person name="Kleine K."/>
        </authorList>
    </citation>
    <scope>NUCLEOTIDE SEQUENCE [LARGE SCALE GENOMIC DNA]</scope>
    <source>
        <strain>ATCC 204508 / S288c</strain>
    </source>
</reference>
<reference key="3">
    <citation type="journal article" date="2014" name="G3 (Bethesda)">
        <title>The reference genome sequence of Saccharomyces cerevisiae: Then and now.</title>
        <authorList>
            <person name="Engel S.R."/>
            <person name="Dietrich F.S."/>
            <person name="Fisk D.G."/>
            <person name="Binkley G."/>
            <person name="Balakrishnan R."/>
            <person name="Costanzo M.C."/>
            <person name="Dwight S.S."/>
            <person name="Hitz B.C."/>
            <person name="Karra K."/>
            <person name="Nash R.S."/>
            <person name="Weng S."/>
            <person name="Wong E.D."/>
            <person name="Lloyd P."/>
            <person name="Skrzypek M.S."/>
            <person name="Miyasato S.R."/>
            <person name="Simison M."/>
            <person name="Cherry J.M."/>
        </authorList>
    </citation>
    <scope>GENOME REANNOTATION</scope>
    <source>
        <strain>ATCC 204508 / S288c</strain>
    </source>
</reference>
<reference key="4">
    <citation type="journal article" date="2003" name="Science">
        <title>Finding functional features in Saccharomyces genomes by phylogenetic footprinting.</title>
        <authorList>
            <person name="Cliften P.F."/>
            <person name="Sudarsanam P."/>
            <person name="Desikan A."/>
            <person name="Fulton L."/>
            <person name="Fulton B."/>
            <person name="Majors J."/>
            <person name="Waterston R."/>
            <person name="Cohen B.A."/>
            <person name="Johnston M."/>
        </authorList>
    </citation>
    <scope>GENOME REANNOTATION</scope>
</reference>
<proteinExistence type="predicted"/>
<sequence>MSNKEITCIKPFKIIALILLIVLIINLSYKLFLRRYLKSTVIWCLGIANTDRNDMMWWQVSPLLERWVWQLVDNYESGYE</sequence>
<name>YG194_YEAST</name>
<dbReference type="EMBL" id="X91837">
    <property type="status" value="NOT_ANNOTATED_CDS"/>
    <property type="molecule type" value="Genomic_DNA"/>
</dbReference>
<dbReference type="EMBL" id="Z72716">
    <property type="status" value="NOT_ANNOTATED_CDS"/>
    <property type="molecule type" value="Genomic_DNA"/>
</dbReference>
<dbReference type="EMBL" id="Z72717">
    <property type="status" value="NOT_ANNOTATED_CDS"/>
    <property type="molecule type" value="Genomic_DNA"/>
</dbReference>
<dbReference type="EMBL" id="BK006941">
    <property type="protein sequence ID" value="DAA07920.1"/>
    <property type="molecule type" value="Genomic_DNA"/>
</dbReference>
<dbReference type="RefSeq" id="NP_001032578.1">
    <property type="nucleotide sequence ID" value="NM_001184677.1"/>
</dbReference>
<dbReference type="SMR" id="Q2V2P6"/>
<dbReference type="BioGRID" id="531944">
    <property type="interactions" value="2"/>
</dbReference>
<dbReference type="FunCoup" id="Q2V2P6">
    <property type="interactions" value="3"/>
</dbReference>
<dbReference type="PaxDb" id="4932-YGL194C-A"/>
<dbReference type="PeptideAtlas" id="Q2V2P6"/>
<dbReference type="EnsemblFungi" id="YGL194C-A_mRNA">
    <property type="protein sequence ID" value="YGL194C-A"/>
    <property type="gene ID" value="YGL194C-A"/>
</dbReference>
<dbReference type="GeneID" id="3799973"/>
<dbReference type="KEGG" id="sce:YGL194C-A"/>
<dbReference type="AGR" id="SGD:S000087160"/>
<dbReference type="SGD" id="S000087160">
    <property type="gene designation" value="YGL194C-A"/>
</dbReference>
<dbReference type="VEuPathDB" id="FungiDB:YGL194C-A"/>
<dbReference type="HOGENOM" id="CLU_190836_1_0_1"/>
<dbReference type="InParanoid" id="Q2V2P6"/>
<dbReference type="OMA" id="NNECTEL"/>
<dbReference type="OrthoDB" id="4050294at2759"/>
<dbReference type="BioCyc" id="YEAST:G3O-31024-MONOMER"/>
<dbReference type="BioGRID-ORCS" id="3799973">
    <property type="hits" value="1 hit in 10 CRISPR screens"/>
</dbReference>
<dbReference type="PRO" id="PR:Q2V2P6"/>
<dbReference type="Proteomes" id="UP000002311">
    <property type="component" value="Chromosome VII"/>
</dbReference>
<dbReference type="RNAct" id="Q2V2P6">
    <property type="molecule type" value="protein"/>
</dbReference>
<dbReference type="GO" id="GO:0005783">
    <property type="term" value="C:endoplasmic reticulum"/>
    <property type="evidence" value="ECO:0007005"/>
    <property type="project" value="SGD"/>
</dbReference>
<dbReference type="GO" id="GO:0016020">
    <property type="term" value="C:membrane"/>
    <property type="evidence" value="ECO:0007669"/>
    <property type="project" value="UniProtKB-SubCell"/>
</dbReference>
<organism>
    <name type="scientific">Saccharomyces cerevisiae (strain ATCC 204508 / S288c)</name>
    <name type="common">Baker's yeast</name>
    <dbReference type="NCBI Taxonomy" id="559292"/>
    <lineage>
        <taxon>Eukaryota</taxon>
        <taxon>Fungi</taxon>
        <taxon>Dikarya</taxon>
        <taxon>Ascomycota</taxon>
        <taxon>Saccharomycotina</taxon>
        <taxon>Saccharomycetes</taxon>
        <taxon>Saccharomycetales</taxon>
        <taxon>Saccharomycetaceae</taxon>
        <taxon>Saccharomyces</taxon>
    </lineage>
</organism>
<evidence type="ECO:0000255" key="1"/>
<evidence type="ECO:0000305" key="2"/>
<feature type="chain" id="PRO_0000245377" description="Uncharacterized protein YGL194C-A">
    <location>
        <begin position="1"/>
        <end position="80"/>
    </location>
</feature>
<feature type="transmembrane region" description="Helical" evidence="1">
    <location>
        <begin position="12"/>
        <end position="32"/>
    </location>
</feature>
<keyword id="KW-0472">Membrane</keyword>
<keyword id="KW-1185">Reference proteome</keyword>
<keyword id="KW-0812">Transmembrane</keyword>
<keyword id="KW-1133">Transmembrane helix</keyword>